<reference key="1">
    <citation type="journal article" date="1997" name="Plant Cell">
        <title>A new class of plastidic phosphate translocators: a putative link between primary and secondary metabolism by the phosphoenolpyruvate/phosphate antiporter.</title>
        <authorList>
            <person name="Fischer K."/>
            <person name="Kammerer B."/>
            <person name="Gutensohn M."/>
            <person name="Arbinger B."/>
            <person name="Weber A."/>
            <person name="Hausler R.E."/>
            <person name="Fluegge U.-I."/>
        </authorList>
    </citation>
    <scope>NUCLEOTIDE SEQUENCE [MRNA]</scope>
    <source>
        <tissue>Leaf</tissue>
    </source>
</reference>
<keyword id="KW-0150">Chloroplast</keyword>
<keyword id="KW-0472">Membrane</keyword>
<keyword id="KW-0934">Plastid</keyword>
<keyword id="KW-0809">Transit peptide</keyword>
<keyword id="KW-0812">Transmembrane</keyword>
<keyword id="KW-1133">Transmembrane helix</keyword>
<keyword id="KW-0813">Transport</keyword>
<sequence>MESRVLLRATETVTGVPQLRRPIRAINRQFSTASSSFTAFAKPIGSIGEGGNLISGRQLRPLLLLDSLPEKREILKPVRAASAEGGDSAGETKVGFLGKYPWLVTGILLLMWYFLNVIFNILNKKIYNYFPYPYFVSVIHLFVGVVYCLVSWSVGLPKRAPVNSDILKVLIPVAVCHAIGHVTSNVSFAAVAVSFTHTIKALEPFFNASASQFLLGQPIPITLWLSLAPVVLGVAMASLTELSFNWLGFISAMISNISFTYRSIFSKKAMTDMDSTNVYAYISIIALFVCLPPAIIVEGPQLLKHGFNDAIAKVGMTKFISDLFWVGMFYHLYNQLATNTLERVAPLTHAVGNVLKRVFVIGFSIVIFGNKISTQTGIGTGIAIAGVALYSVIKAKIEEEKRQGKTA</sequence>
<feature type="transit peptide" description="Chloroplast" evidence="2">
    <location>
        <begin position="1"/>
        <end position="79"/>
    </location>
</feature>
<feature type="chain" id="PRO_0000035703" description="Triose phosphate/phosphate translocator, chloroplastic">
    <location>
        <begin position="80"/>
        <end position="407"/>
    </location>
</feature>
<feature type="topological domain" description="Chloroplast intermembrane" evidence="2">
    <location>
        <begin position="80"/>
        <end position="101"/>
    </location>
</feature>
<feature type="transmembrane region" description="Helical" evidence="2">
    <location>
        <begin position="102"/>
        <end position="122"/>
    </location>
</feature>
<feature type="topological domain" description="Lumenal" evidence="2">
    <location>
        <begin position="123"/>
        <end position="134"/>
    </location>
</feature>
<feature type="transmembrane region" description="Helical" evidence="2">
    <location>
        <begin position="135"/>
        <end position="155"/>
    </location>
</feature>
<feature type="topological domain" description="Chloroplast intermembrane" evidence="2">
    <location>
        <begin position="156"/>
        <end position="212"/>
    </location>
</feature>
<feature type="transmembrane region" description="Helical" evidence="2">
    <location>
        <begin position="213"/>
        <end position="233"/>
    </location>
</feature>
<feature type="topological domain" description="Lumenal" evidence="2">
    <location>
        <begin position="234"/>
        <end position="277"/>
    </location>
</feature>
<feature type="transmembrane region" description="Helical" evidence="2">
    <location>
        <begin position="278"/>
        <end position="297"/>
    </location>
</feature>
<feature type="topological domain" description="Chloroplast intermembrane" evidence="2">
    <location>
        <begin position="298"/>
        <end position="375"/>
    </location>
</feature>
<feature type="transmembrane region" description="Helical" evidence="2">
    <location>
        <begin position="376"/>
        <end position="396"/>
    </location>
</feature>
<feature type="topological domain" description="Lumenal" evidence="2">
    <location>
        <begin position="397"/>
        <end position="407"/>
    </location>
</feature>
<organism>
    <name type="scientific">Brassica oleracea var. botrytis</name>
    <name type="common">Cauliflower</name>
    <dbReference type="NCBI Taxonomy" id="3715"/>
    <lineage>
        <taxon>Eukaryota</taxon>
        <taxon>Viridiplantae</taxon>
        <taxon>Streptophyta</taxon>
        <taxon>Embryophyta</taxon>
        <taxon>Tracheophyta</taxon>
        <taxon>Spermatophyta</taxon>
        <taxon>Magnoliopsida</taxon>
        <taxon>eudicotyledons</taxon>
        <taxon>Gunneridae</taxon>
        <taxon>Pentapetalae</taxon>
        <taxon>rosids</taxon>
        <taxon>malvids</taxon>
        <taxon>Brassicales</taxon>
        <taxon>Brassicaceae</taxon>
        <taxon>Brassiceae</taxon>
        <taxon>Brassica</taxon>
    </lineage>
</organism>
<name>TPT1_BRAOB</name>
<comment type="function">
    <text>Mediates the export of fixed carbons from the chloroplasts into the cytosol in the form of triose phosphates.</text>
</comment>
<comment type="subunit">
    <text evidence="1">Homodimer.</text>
</comment>
<comment type="subcellular location">
    <subcellularLocation>
        <location evidence="1">Plastid</location>
        <location evidence="1">Chloroplast membrane</location>
        <topology evidence="1">Multi-pass membrane protein</topology>
    </subcellularLocation>
    <text evidence="1">Located in zones of contact between the inner and outer membrane of the chloroplast.</text>
</comment>
<comment type="similarity">
    <text evidence="3">Belongs to the TPT transporter family. TPT (TC 2.A.7.9) subfamily.</text>
</comment>
<gene>
    <name type="primary">TPT</name>
</gene>
<proteinExistence type="evidence at transcript level"/>
<accession>P52177</accession>
<protein>
    <recommendedName>
        <fullName>Triose phosphate/phosphate translocator, chloroplastic</fullName>
        <shortName>cTPT</shortName>
    </recommendedName>
</protein>
<evidence type="ECO:0000250" key="1"/>
<evidence type="ECO:0000255" key="2"/>
<evidence type="ECO:0000305" key="3"/>
<dbReference type="EMBL" id="U13630">
    <property type="protein sequence ID" value="AAA84890.1"/>
    <property type="molecule type" value="mRNA"/>
</dbReference>
<dbReference type="PIR" id="T14436">
    <property type="entry name" value="T14436"/>
</dbReference>
<dbReference type="SMR" id="P52177"/>
<dbReference type="GO" id="GO:0031969">
    <property type="term" value="C:chloroplast membrane"/>
    <property type="evidence" value="ECO:0007669"/>
    <property type="project" value="UniProtKB-SubCell"/>
</dbReference>
<dbReference type="GO" id="GO:0015605">
    <property type="term" value="F:organophosphate ester transmembrane transporter activity"/>
    <property type="evidence" value="ECO:0007669"/>
    <property type="project" value="UniProtKB-ARBA"/>
</dbReference>
<dbReference type="GO" id="GO:0015120">
    <property type="term" value="F:phosphoglycerate transmembrane transporter activity"/>
    <property type="evidence" value="ECO:0007669"/>
    <property type="project" value="UniProtKB-ARBA"/>
</dbReference>
<dbReference type="InterPro" id="IPR004853">
    <property type="entry name" value="Sugar_P_trans_dom"/>
</dbReference>
<dbReference type="InterPro" id="IPR004696">
    <property type="entry name" value="Tpt_PEP_transl"/>
</dbReference>
<dbReference type="InterPro" id="IPR050186">
    <property type="entry name" value="TPT_transporter"/>
</dbReference>
<dbReference type="NCBIfam" id="TIGR00817">
    <property type="entry name" value="tpt"/>
    <property type="match status" value="1"/>
</dbReference>
<dbReference type="PANTHER" id="PTHR11132">
    <property type="entry name" value="SOLUTE CARRIER FAMILY 35"/>
    <property type="match status" value="1"/>
</dbReference>
<dbReference type="Pfam" id="PF03151">
    <property type="entry name" value="TPT"/>
    <property type="match status" value="1"/>
</dbReference>
<dbReference type="SUPFAM" id="SSF103481">
    <property type="entry name" value="Multidrug resistance efflux transporter EmrE"/>
    <property type="match status" value="1"/>
</dbReference>